<keyword id="KW-0963">Cytoplasm</keyword>
<keyword id="KW-1185">Reference proteome</keyword>
<keyword id="KW-0690">Ribosome biogenesis</keyword>
<gene>
    <name evidence="1" type="primary">rbfA</name>
    <name type="ordered locus">Mmc1_3725</name>
</gene>
<name>RBFA_MAGMM</name>
<feature type="chain" id="PRO_0000321229" description="Ribosome-binding factor A">
    <location>
        <begin position="1"/>
        <end position="123"/>
    </location>
</feature>
<comment type="function">
    <text evidence="1">One of several proteins that assist in the late maturation steps of the functional core of the 30S ribosomal subunit. Associates with free 30S ribosomal subunits (but not with 30S subunits that are part of 70S ribosomes or polysomes). Required for efficient processing of 16S rRNA. May interact with the 5'-terminal helix region of 16S rRNA.</text>
</comment>
<comment type="subunit">
    <text evidence="1">Monomer. Binds 30S ribosomal subunits, but not 50S ribosomal subunits or 70S ribosomes.</text>
</comment>
<comment type="subcellular location">
    <subcellularLocation>
        <location evidence="1">Cytoplasm</location>
    </subcellularLocation>
</comment>
<comment type="similarity">
    <text evidence="1">Belongs to the RbfA family.</text>
</comment>
<dbReference type="EMBL" id="CP000471">
    <property type="protein sequence ID" value="ABK46210.1"/>
    <property type="molecule type" value="Genomic_DNA"/>
</dbReference>
<dbReference type="RefSeq" id="WP_011715262.1">
    <property type="nucleotide sequence ID" value="NC_008576.1"/>
</dbReference>
<dbReference type="SMR" id="A0LE17"/>
<dbReference type="STRING" id="156889.Mmc1_3725"/>
<dbReference type="KEGG" id="mgm:Mmc1_3725"/>
<dbReference type="eggNOG" id="COG0858">
    <property type="taxonomic scope" value="Bacteria"/>
</dbReference>
<dbReference type="HOGENOM" id="CLU_089475_6_3_5"/>
<dbReference type="OrthoDB" id="9805051at2"/>
<dbReference type="Proteomes" id="UP000002586">
    <property type="component" value="Chromosome"/>
</dbReference>
<dbReference type="GO" id="GO:0005829">
    <property type="term" value="C:cytosol"/>
    <property type="evidence" value="ECO:0007669"/>
    <property type="project" value="TreeGrafter"/>
</dbReference>
<dbReference type="GO" id="GO:0043024">
    <property type="term" value="F:ribosomal small subunit binding"/>
    <property type="evidence" value="ECO:0007669"/>
    <property type="project" value="TreeGrafter"/>
</dbReference>
<dbReference type="GO" id="GO:0030490">
    <property type="term" value="P:maturation of SSU-rRNA"/>
    <property type="evidence" value="ECO:0007669"/>
    <property type="project" value="UniProtKB-UniRule"/>
</dbReference>
<dbReference type="Gene3D" id="3.30.300.20">
    <property type="match status" value="1"/>
</dbReference>
<dbReference type="HAMAP" id="MF_00003">
    <property type="entry name" value="RbfA"/>
    <property type="match status" value="1"/>
</dbReference>
<dbReference type="InterPro" id="IPR015946">
    <property type="entry name" value="KH_dom-like_a/b"/>
</dbReference>
<dbReference type="InterPro" id="IPR000238">
    <property type="entry name" value="RbfA"/>
</dbReference>
<dbReference type="InterPro" id="IPR023799">
    <property type="entry name" value="RbfA_dom_sf"/>
</dbReference>
<dbReference type="InterPro" id="IPR020053">
    <property type="entry name" value="Ribosome-bd_factorA_CS"/>
</dbReference>
<dbReference type="NCBIfam" id="TIGR00082">
    <property type="entry name" value="rbfA"/>
    <property type="match status" value="1"/>
</dbReference>
<dbReference type="PANTHER" id="PTHR33515">
    <property type="entry name" value="RIBOSOME-BINDING FACTOR A, CHLOROPLASTIC-RELATED"/>
    <property type="match status" value="1"/>
</dbReference>
<dbReference type="PANTHER" id="PTHR33515:SF1">
    <property type="entry name" value="RIBOSOME-BINDING FACTOR A, CHLOROPLASTIC-RELATED"/>
    <property type="match status" value="1"/>
</dbReference>
<dbReference type="Pfam" id="PF02033">
    <property type="entry name" value="RBFA"/>
    <property type="match status" value="1"/>
</dbReference>
<dbReference type="SUPFAM" id="SSF89919">
    <property type="entry name" value="Ribosome-binding factor A, RbfA"/>
    <property type="match status" value="1"/>
</dbReference>
<dbReference type="PROSITE" id="PS01319">
    <property type="entry name" value="RBFA"/>
    <property type="match status" value="1"/>
</dbReference>
<proteinExistence type="inferred from homology"/>
<evidence type="ECO:0000255" key="1">
    <source>
        <dbReference type="HAMAP-Rule" id="MF_00003"/>
    </source>
</evidence>
<reference key="1">
    <citation type="journal article" date="2009" name="Appl. Environ. Microbiol.">
        <title>Complete genome sequence of the chemolithoautotrophic marine magnetotactic coccus strain MC-1.</title>
        <authorList>
            <person name="Schubbe S."/>
            <person name="Williams T.J."/>
            <person name="Xie G."/>
            <person name="Kiss H.E."/>
            <person name="Brettin T.S."/>
            <person name="Martinez D."/>
            <person name="Ross C.A."/>
            <person name="Schuler D."/>
            <person name="Cox B.L."/>
            <person name="Nealson K.H."/>
            <person name="Bazylinski D.A."/>
        </authorList>
    </citation>
    <scope>NUCLEOTIDE SEQUENCE [LARGE SCALE GENOMIC DNA]</scope>
    <source>
        <strain>ATCC BAA-1437 / JCM 17883 / MC-1</strain>
    </source>
</reference>
<organism>
    <name type="scientific">Magnetococcus marinus (strain ATCC BAA-1437 / JCM 17883 / MC-1)</name>
    <dbReference type="NCBI Taxonomy" id="156889"/>
    <lineage>
        <taxon>Bacteria</taxon>
        <taxon>Pseudomonadati</taxon>
        <taxon>Pseudomonadota</taxon>
        <taxon>Alphaproteobacteria</taxon>
        <taxon>Magnetococcales</taxon>
        <taxon>Magnetococcaceae</taxon>
        <taxon>Magnetococcus</taxon>
    </lineage>
</organism>
<sequence length="123" mass="13913">MTIRTERVGNAIRKEVASMLTRGEIKDPRLGGFVNIQEVRVSPDLSYAKVYYTVFGESDQAGVADAWQRASGFLRNVIAKRLKLRHAPELRFELDHVADYSKRIDELLNGLEIPPADDSDETH</sequence>
<protein>
    <recommendedName>
        <fullName evidence="1">Ribosome-binding factor A</fullName>
    </recommendedName>
</protein>
<accession>A0LE17</accession>